<accession>A1BI83</accession>
<organism>
    <name type="scientific">Chlorobium phaeobacteroides (strain DSM 266 / SMG 266 / 2430)</name>
    <dbReference type="NCBI Taxonomy" id="290317"/>
    <lineage>
        <taxon>Bacteria</taxon>
        <taxon>Pseudomonadati</taxon>
        <taxon>Chlorobiota</taxon>
        <taxon>Chlorobiia</taxon>
        <taxon>Chlorobiales</taxon>
        <taxon>Chlorobiaceae</taxon>
        <taxon>Chlorobium/Pelodictyon group</taxon>
        <taxon>Chlorobium</taxon>
    </lineage>
</organism>
<dbReference type="EC" id="3.2.2.-" evidence="1"/>
<dbReference type="EMBL" id="CP000492">
    <property type="protein sequence ID" value="ABL66110.1"/>
    <property type="molecule type" value="Genomic_DNA"/>
</dbReference>
<dbReference type="RefSeq" id="WP_011745912.1">
    <property type="nucleotide sequence ID" value="NC_008639.1"/>
</dbReference>
<dbReference type="SMR" id="A1BI83"/>
<dbReference type="STRING" id="290317.Cpha266_2098"/>
<dbReference type="KEGG" id="cph:Cpha266_2098"/>
<dbReference type="eggNOG" id="COG2094">
    <property type="taxonomic scope" value="Bacteria"/>
</dbReference>
<dbReference type="HOGENOM" id="CLU_060471_2_0_10"/>
<dbReference type="OrthoDB" id="9794313at2"/>
<dbReference type="Proteomes" id="UP000008701">
    <property type="component" value="Chromosome"/>
</dbReference>
<dbReference type="GO" id="GO:0003905">
    <property type="term" value="F:alkylbase DNA N-glycosylase activity"/>
    <property type="evidence" value="ECO:0007669"/>
    <property type="project" value="InterPro"/>
</dbReference>
<dbReference type="GO" id="GO:0003677">
    <property type="term" value="F:DNA binding"/>
    <property type="evidence" value="ECO:0007669"/>
    <property type="project" value="InterPro"/>
</dbReference>
<dbReference type="GO" id="GO:0006284">
    <property type="term" value="P:base-excision repair"/>
    <property type="evidence" value="ECO:0007669"/>
    <property type="project" value="InterPro"/>
</dbReference>
<dbReference type="CDD" id="cd00540">
    <property type="entry name" value="AAG"/>
    <property type="match status" value="1"/>
</dbReference>
<dbReference type="FunFam" id="3.10.300.10:FF:000001">
    <property type="entry name" value="Putative 3-methyladenine DNA glycosylase"/>
    <property type="match status" value="1"/>
</dbReference>
<dbReference type="Gene3D" id="3.10.300.10">
    <property type="entry name" value="Methylpurine-DNA glycosylase (MPG)"/>
    <property type="match status" value="1"/>
</dbReference>
<dbReference type="HAMAP" id="MF_00527">
    <property type="entry name" value="3MGH"/>
    <property type="match status" value="1"/>
</dbReference>
<dbReference type="InterPro" id="IPR011034">
    <property type="entry name" value="Formyl_transferase-like_C_sf"/>
</dbReference>
<dbReference type="InterPro" id="IPR003180">
    <property type="entry name" value="MPG"/>
</dbReference>
<dbReference type="InterPro" id="IPR036995">
    <property type="entry name" value="MPG_sf"/>
</dbReference>
<dbReference type="NCBIfam" id="TIGR00567">
    <property type="entry name" value="3mg"/>
    <property type="match status" value="1"/>
</dbReference>
<dbReference type="NCBIfam" id="NF002003">
    <property type="entry name" value="PRK00802.1-3"/>
    <property type="match status" value="1"/>
</dbReference>
<dbReference type="PANTHER" id="PTHR10429">
    <property type="entry name" value="DNA-3-METHYLADENINE GLYCOSYLASE"/>
    <property type="match status" value="1"/>
</dbReference>
<dbReference type="PANTHER" id="PTHR10429:SF0">
    <property type="entry name" value="DNA-3-METHYLADENINE GLYCOSYLASE"/>
    <property type="match status" value="1"/>
</dbReference>
<dbReference type="Pfam" id="PF02245">
    <property type="entry name" value="Pur_DNA_glyco"/>
    <property type="match status" value="1"/>
</dbReference>
<dbReference type="SUPFAM" id="SSF50486">
    <property type="entry name" value="FMT C-terminal domain-like"/>
    <property type="match status" value="1"/>
</dbReference>
<name>3MGH_CHLPD</name>
<proteinExistence type="inferred from homology"/>
<gene>
    <name type="ordered locus">Cpha266_2098</name>
</gene>
<feature type="chain" id="PRO_1000050984" description="Putative 3-methyladenine DNA glycosylase">
    <location>
        <begin position="1"/>
        <end position="196"/>
    </location>
</feature>
<protein>
    <recommendedName>
        <fullName evidence="1">Putative 3-methyladenine DNA glycosylase</fullName>
        <ecNumber evidence="1">3.2.2.-</ecNumber>
    </recommendedName>
</protein>
<reference key="1">
    <citation type="submission" date="2006-12" db="EMBL/GenBank/DDBJ databases">
        <title>Complete sequence of Chlorobium phaeobacteroides DSM 266.</title>
        <authorList>
            <consortium name="US DOE Joint Genome Institute"/>
            <person name="Copeland A."/>
            <person name="Lucas S."/>
            <person name="Lapidus A."/>
            <person name="Barry K."/>
            <person name="Detter J.C."/>
            <person name="Glavina del Rio T."/>
            <person name="Hammon N."/>
            <person name="Israni S."/>
            <person name="Pitluck S."/>
            <person name="Goltsman E."/>
            <person name="Schmutz J."/>
            <person name="Larimer F."/>
            <person name="Land M."/>
            <person name="Hauser L."/>
            <person name="Mikhailova N."/>
            <person name="Li T."/>
            <person name="Overmann J."/>
            <person name="Bryant D.A."/>
            <person name="Richardson P."/>
        </authorList>
    </citation>
    <scope>NUCLEOTIDE SEQUENCE [LARGE SCALE GENOMIC DNA]</scope>
    <source>
        <strain>DSM 266 / SMG 266 / 2430</strain>
    </source>
</reference>
<keyword id="KW-0227">DNA damage</keyword>
<keyword id="KW-0234">DNA repair</keyword>
<keyword id="KW-0378">Hydrolase</keyword>
<keyword id="KW-1185">Reference proteome</keyword>
<comment type="similarity">
    <text evidence="1">Belongs to the DNA glycosylase MPG family.</text>
</comment>
<evidence type="ECO:0000255" key="1">
    <source>
        <dbReference type="HAMAP-Rule" id="MF_00527"/>
    </source>
</evidence>
<sequence>MPIVPKHFFERPTLELAEKLLGKIFVRRISDTIRLKGRIVETEAYCGEFDEASHAWRGKTTRNSMMFNSPGMLYVYLAYGSHYMLNIVSEPENIPGAVLIRAMEPIDGLMFMKEQRGTALATSLLSGPGKLTQAFAIRGDCNGKDLFNNEFFLENAQDIPQNAMGSGSRVGITKSRQLQWRKYILNNPHVSKARGS</sequence>